<feature type="chain" id="PRO_1000090950" description="Aspartate--tRNA(Asp/Asn) ligase">
    <location>
        <begin position="1"/>
        <end position="592"/>
    </location>
</feature>
<feature type="region of interest" description="Aspartate" evidence="1">
    <location>
        <begin position="199"/>
        <end position="202"/>
    </location>
</feature>
<feature type="binding site" evidence="1">
    <location>
        <position position="175"/>
    </location>
    <ligand>
        <name>L-aspartate</name>
        <dbReference type="ChEBI" id="CHEBI:29991"/>
    </ligand>
</feature>
<feature type="binding site" evidence="1">
    <location>
        <begin position="221"/>
        <end position="223"/>
    </location>
    <ligand>
        <name>ATP</name>
        <dbReference type="ChEBI" id="CHEBI:30616"/>
    </ligand>
</feature>
<feature type="binding site" evidence="1">
    <location>
        <position position="221"/>
    </location>
    <ligand>
        <name>L-aspartate</name>
        <dbReference type="ChEBI" id="CHEBI:29991"/>
    </ligand>
</feature>
<feature type="binding site" evidence="1">
    <location>
        <position position="230"/>
    </location>
    <ligand>
        <name>ATP</name>
        <dbReference type="ChEBI" id="CHEBI:30616"/>
    </ligand>
</feature>
<feature type="binding site" evidence="1">
    <location>
        <position position="450"/>
    </location>
    <ligand>
        <name>L-aspartate</name>
        <dbReference type="ChEBI" id="CHEBI:29991"/>
    </ligand>
</feature>
<feature type="binding site" evidence="1">
    <location>
        <position position="483"/>
    </location>
    <ligand>
        <name>ATP</name>
        <dbReference type="ChEBI" id="CHEBI:30616"/>
    </ligand>
</feature>
<feature type="binding site" evidence="1">
    <location>
        <position position="490"/>
    </location>
    <ligand>
        <name>L-aspartate</name>
        <dbReference type="ChEBI" id="CHEBI:29991"/>
    </ligand>
</feature>
<feature type="binding site" evidence="1">
    <location>
        <begin position="535"/>
        <end position="538"/>
    </location>
    <ligand>
        <name>ATP</name>
        <dbReference type="ChEBI" id="CHEBI:30616"/>
    </ligand>
</feature>
<feature type="site" description="Important for tRNA non-discrimination" evidence="1">
    <location>
        <position position="31"/>
    </location>
</feature>
<feature type="site" description="Important for tRNA non-discrimination" evidence="1">
    <location>
        <position position="82"/>
    </location>
</feature>
<gene>
    <name evidence="1" type="primary">aspS</name>
    <name type="ordered locus">ABAYE0588</name>
</gene>
<evidence type="ECO:0000255" key="1">
    <source>
        <dbReference type="HAMAP-Rule" id="MF_00044"/>
    </source>
</evidence>
<accession>B0V550</accession>
<organism>
    <name type="scientific">Acinetobacter baumannii (strain AYE)</name>
    <dbReference type="NCBI Taxonomy" id="509173"/>
    <lineage>
        <taxon>Bacteria</taxon>
        <taxon>Pseudomonadati</taxon>
        <taxon>Pseudomonadota</taxon>
        <taxon>Gammaproteobacteria</taxon>
        <taxon>Moraxellales</taxon>
        <taxon>Moraxellaceae</taxon>
        <taxon>Acinetobacter</taxon>
        <taxon>Acinetobacter calcoaceticus/baumannii complex</taxon>
    </lineage>
</organism>
<keyword id="KW-0030">Aminoacyl-tRNA synthetase</keyword>
<keyword id="KW-0067">ATP-binding</keyword>
<keyword id="KW-0963">Cytoplasm</keyword>
<keyword id="KW-0436">Ligase</keyword>
<keyword id="KW-0547">Nucleotide-binding</keyword>
<keyword id="KW-0648">Protein biosynthesis</keyword>
<dbReference type="EC" id="6.1.1.23" evidence="1"/>
<dbReference type="EMBL" id="CU459141">
    <property type="protein sequence ID" value="CAM85556.1"/>
    <property type="molecule type" value="Genomic_DNA"/>
</dbReference>
<dbReference type="RefSeq" id="WP_000986451.1">
    <property type="nucleotide sequence ID" value="NZ_JBDGFB010000017.1"/>
</dbReference>
<dbReference type="SMR" id="B0V550"/>
<dbReference type="EnsemblBacteria" id="CAM85556">
    <property type="protein sequence ID" value="CAM85556"/>
    <property type="gene ID" value="ABAYE0588"/>
</dbReference>
<dbReference type="GeneID" id="92895173"/>
<dbReference type="KEGG" id="aby:ABAYE0588"/>
<dbReference type="HOGENOM" id="CLU_014330_3_2_6"/>
<dbReference type="GO" id="GO:0005737">
    <property type="term" value="C:cytoplasm"/>
    <property type="evidence" value="ECO:0007669"/>
    <property type="project" value="UniProtKB-SubCell"/>
</dbReference>
<dbReference type="GO" id="GO:0004815">
    <property type="term" value="F:aspartate-tRNA ligase activity"/>
    <property type="evidence" value="ECO:0007669"/>
    <property type="project" value="UniProtKB-UniRule"/>
</dbReference>
<dbReference type="GO" id="GO:0050560">
    <property type="term" value="F:aspartate-tRNA(Asn) ligase activity"/>
    <property type="evidence" value="ECO:0007669"/>
    <property type="project" value="UniProtKB-EC"/>
</dbReference>
<dbReference type="GO" id="GO:0005524">
    <property type="term" value="F:ATP binding"/>
    <property type="evidence" value="ECO:0007669"/>
    <property type="project" value="UniProtKB-UniRule"/>
</dbReference>
<dbReference type="GO" id="GO:0003676">
    <property type="term" value="F:nucleic acid binding"/>
    <property type="evidence" value="ECO:0007669"/>
    <property type="project" value="InterPro"/>
</dbReference>
<dbReference type="GO" id="GO:0006422">
    <property type="term" value="P:aspartyl-tRNA aminoacylation"/>
    <property type="evidence" value="ECO:0007669"/>
    <property type="project" value="UniProtKB-UniRule"/>
</dbReference>
<dbReference type="CDD" id="cd00777">
    <property type="entry name" value="AspRS_core"/>
    <property type="match status" value="1"/>
</dbReference>
<dbReference type="CDD" id="cd04317">
    <property type="entry name" value="EcAspRS_like_N"/>
    <property type="match status" value="1"/>
</dbReference>
<dbReference type="Gene3D" id="3.30.930.10">
    <property type="entry name" value="Bira Bifunctional Protein, Domain 2"/>
    <property type="match status" value="1"/>
</dbReference>
<dbReference type="Gene3D" id="3.30.1360.30">
    <property type="entry name" value="GAD-like domain"/>
    <property type="match status" value="1"/>
</dbReference>
<dbReference type="Gene3D" id="2.40.50.140">
    <property type="entry name" value="Nucleic acid-binding proteins"/>
    <property type="match status" value="1"/>
</dbReference>
<dbReference type="HAMAP" id="MF_00044">
    <property type="entry name" value="Asp_tRNA_synth_type1"/>
    <property type="match status" value="1"/>
</dbReference>
<dbReference type="InterPro" id="IPR004364">
    <property type="entry name" value="Aa-tRNA-synt_II"/>
</dbReference>
<dbReference type="InterPro" id="IPR006195">
    <property type="entry name" value="aa-tRNA-synth_II"/>
</dbReference>
<dbReference type="InterPro" id="IPR045864">
    <property type="entry name" value="aa-tRNA-synth_II/BPL/LPL"/>
</dbReference>
<dbReference type="InterPro" id="IPR004524">
    <property type="entry name" value="Asp-tRNA-ligase_1"/>
</dbReference>
<dbReference type="InterPro" id="IPR047089">
    <property type="entry name" value="Asp-tRNA-ligase_1_N"/>
</dbReference>
<dbReference type="InterPro" id="IPR002312">
    <property type="entry name" value="Asp/Asn-tRNA-synth_IIb"/>
</dbReference>
<dbReference type="InterPro" id="IPR047090">
    <property type="entry name" value="AspRS_core"/>
</dbReference>
<dbReference type="InterPro" id="IPR004115">
    <property type="entry name" value="GAD-like_sf"/>
</dbReference>
<dbReference type="InterPro" id="IPR029351">
    <property type="entry name" value="GAD_dom"/>
</dbReference>
<dbReference type="InterPro" id="IPR012340">
    <property type="entry name" value="NA-bd_OB-fold"/>
</dbReference>
<dbReference type="InterPro" id="IPR004365">
    <property type="entry name" value="NA-bd_OB_tRNA"/>
</dbReference>
<dbReference type="NCBIfam" id="TIGR00459">
    <property type="entry name" value="aspS_bact"/>
    <property type="match status" value="1"/>
</dbReference>
<dbReference type="NCBIfam" id="NF001750">
    <property type="entry name" value="PRK00476.1"/>
    <property type="match status" value="1"/>
</dbReference>
<dbReference type="PANTHER" id="PTHR22594:SF5">
    <property type="entry name" value="ASPARTATE--TRNA LIGASE, MITOCHONDRIAL"/>
    <property type="match status" value="1"/>
</dbReference>
<dbReference type="PANTHER" id="PTHR22594">
    <property type="entry name" value="ASPARTYL/LYSYL-TRNA SYNTHETASE"/>
    <property type="match status" value="1"/>
</dbReference>
<dbReference type="Pfam" id="PF02938">
    <property type="entry name" value="GAD"/>
    <property type="match status" value="1"/>
</dbReference>
<dbReference type="Pfam" id="PF00152">
    <property type="entry name" value="tRNA-synt_2"/>
    <property type="match status" value="1"/>
</dbReference>
<dbReference type="Pfam" id="PF01336">
    <property type="entry name" value="tRNA_anti-codon"/>
    <property type="match status" value="1"/>
</dbReference>
<dbReference type="PRINTS" id="PR01042">
    <property type="entry name" value="TRNASYNTHASP"/>
</dbReference>
<dbReference type="SUPFAM" id="SSF55681">
    <property type="entry name" value="Class II aaRS and biotin synthetases"/>
    <property type="match status" value="1"/>
</dbReference>
<dbReference type="SUPFAM" id="SSF55261">
    <property type="entry name" value="GAD domain-like"/>
    <property type="match status" value="1"/>
</dbReference>
<dbReference type="SUPFAM" id="SSF50249">
    <property type="entry name" value="Nucleic acid-binding proteins"/>
    <property type="match status" value="1"/>
</dbReference>
<dbReference type="PROSITE" id="PS50862">
    <property type="entry name" value="AA_TRNA_LIGASE_II"/>
    <property type="match status" value="1"/>
</dbReference>
<reference key="1">
    <citation type="journal article" date="2008" name="PLoS ONE">
        <title>Comparative analysis of Acinetobacters: three genomes for three lifestyles.</title>
        <authorList>
            <person name="Vallenet D."/>
            <person name="Nordmann P."/>
            <person name="Barbe V."/>
            <person name="Poirel L."/>
            <person name="Mangenot S."/>
            <person name="Bataille E."/>
            <person name="Dossat C."/>
            <person name="Gas S."/>
            <person name="Kreimeyer A."/>
            <person name="Lenoble P."/>
            <person name="Oztas S."/>
            <person name="Poulain J."/>
            <person name="Segurens B."/>
            <person name="Robert C."/>
            <person name="Abergel C."/>
            <person name="Claverie J.-M."/>
            <person name="Raoult D."/>
            <person name="Medigue C."/>
            <person name="Weissenbach J."/>
            <person name="Cruveiller S."/>
        </authorList>
    </citation>
    <scope>NUCLEOTIDE SEQUENCE [LARGE SCALE GENOMIC DNA]</scope>
    <source>
        <strain>AYE</strain>
    </source>
</reference>
<protein>
    <recommendedName>
        <fullName evidence="1">Aspartate--tRNA(Asp/Asn) ligase</fullName>
        <ecNumber evidence="1">6.1.1.23</ecNumber>
    </recommendedName>
    <alternativeName>
        <fullName evidence="1">Aspartyl-tRNA synthetase</fullName>
        <shortName evidence="1">AspRS</shortName>
    </alternativeName>
    <alternativeName>
        <fullName evidence="1">Non-discriminating aspartyl-tRNA synthetase</fullName>
        <shortName evidence="1">ND-AspRS</shortName>
    </alternativeName>
</protein>
<name>SYDND_ACIBY</name>
<proteinExistence type="inferred from homology"/>
<sequence length="592" mass="66667">MMRTHYCGSLTEAQIDQTVTLCGWVHRRRDHGGVIFLDMRDRDGLVQVVIDPDTPEAFATADKARSEYVLKITGRVRRRYEGTENPNMVSGQIEVLGKEIEVLAASETPPFPLNDDTINVSEEHRLKYRFLDIRRPEMLERLRFRSKVTNLIRNYLDDHGFLDVETPILTRATPEGARDYLVPSRVQNGSFYALPQSPQLFKQLLMVGGIDRYYQIAKCFRDEDLRADRQPEFTQIDIETSFLNDDDIMDLMEGMTVKLFNDLLGVKFEKFRRMPYSEAMRDYASDKPDLRIPLKLVDVADLMQEVEFKVFAGPAKDPKGRIAALRVPGAGSLTRSQIDEYTKFVGIYGAKGLAYIKVNEIEKGIEGLQSPIVKFIEPIVMQLLERVGAENGDIVFFGADKAKIVNDAMGALRVKIGHDLNLATCEWAPLWVVDFPMFEETDDGKWTSVHHPFTLPKSSVEDVKSNPGEALSVAYDMVLNGTEVGGGSLRIYTLEMQKAIFEALGISDEEAEEKFSFLLNALRYGAPPHGGLAFGLDRLVMLMTGATSIRDVIAFPKTKTAECPLTQAPAPVEANQLRDLGIRLREQQKKEA</sequence>
<comment type="function">
    <text evidence="1">Aspartyl-tRNA synthetase with relaxed tRNA specificity since it is able to aspartylate not only its cognate tRNA(Asp) but also tRNA(Asn). Reaction proceeds in two steps: L-aspartate is first activated by ATP to form Asp-AMP and then transferred to the acceptor end of tRNA(Asp/Asn).</text>
</comment>
<comment type="catalytic activity">
    <reaction evidence="1">
        <text>tRNA(Asx) + L-aspartate + ATP = L-aspartyl-tRNA(Asx) + AMP + diphosphate</text>
        <dbReference type="Rhea" id="RHEA:18349"/>
        <dbReference type="Rhea" id="RHEA-COMP:9710"/>
        <dbReference type="Rhea" id="RHEA-COMP:9711"/>
        <dbReference type="ChEBI" id="CHEBI:29991"/>
        <dbReference type="ChEBI" id="CHEBI:30616"/>
        <dbReference type="ChEBI" id="CHEBI:33019"/>
        <dbReference type="ChEBI" id="CHEBI:78442"/>
        <dbReference type="ChEBI" id="CHEBI:78516"/>
        <dbReference type="ChEBI" id="CHEBI:456215"/>
        <dbReference type="EC" id="6.1.1.23"/>
    </reaction>
</comment>
<comment type="subunit">
    <text evidence="1">Homodimer.</text>
</comment>
<comment type="subcellular location">
    <subcellularLocation>
        <location evidence="1">Cytoplasm</location>
    </subcellularLocation>
</comment>
<comment type="similarity">
    <text evidence="1">Belongs to the class-II aminoacyl-tRNA synthetase family. Type 1 subfamily.</text>
</comment>